<protein>
    <recommendedName>
        <fullName>G-protein-signaling modulator 3</fullName>
    </recommendedName>
</protein>
<name>GPSM3_MOUSE</name>
<organism>
    <name type="scientific">Mus musculus</name>
    <name type="common">Mouse</name>
    <dbReference type="NCBI Taxonomy" id="10090"/>
    <lineage>
        <taxon>Eukaryota</taxon>
        <taxon>Metazoa</taxon>
        <taxon>Chordata</taxon>
        <taxon>Craniata</taxon>
        <taxon>Vertebrata</taxon>
        <taxon>Euteleostomi</taxon>
        <taxon>Mammalia</taxon>
        <taxon>Eutheria</taxon>
        <taxon>Euarchontoglires</taxon>
        <taxon>Glires</taxon>
        <taxon>Rodentia</taxon>
        <taxon>Myomorpha</taxon>
        <taxon>Muroidea</taxon>
        <taxon>Muridae</taxon>
        <taxon>Murinae</taxon>
        <taxon>Mus</taxon>
        <taxon>Mus</taxon>
    </lineage>
</organism>
<accession>Q3U1Z5</accession>
<accession>Q3U1M8</accession>
<accession>Q3UJZ5</accession>
<accession>Q8VDF9</accession>
<gene>
    <name type="primary">Gpsm3</name>
</gene>
<feature type="chain" id="PRO_0000233718" description="G-protein-signaling modulator 3">
    <location>
        <begin position="1"/>
        <end position="159"/>
    </location>
</feature>
<feature type="domain" description="GoLoco 1" evidence="3">
    <location>
        <begin position="61"/>
        <end position="83"/>
    </location>
</feature>
<feature type="domain" description="GoLoco 2" evidence="3">
    <location>
        <begin position="103"/>
        <end position="125"/>
    </location>
</feature>
<feature type="domain" description="GoLoco 3" evidence="3">
    <location>
        <begin position="131"/>
        <end position="154"/>
    </location>
</feature>
<feature type="region of interest" description="Disordered" evidence="4">
    <location>
        <begin position="1"/>
        <end position="54"/>
    </location>
</feature>
<feature type="region of interest" description="Disordered" evidence="4">
    <location>
        <begin position="77"/>
        <end position="97"/>
    </location>
</feature>
<feature type="compositionally biased region" description="Pro residues" evidence="4">
    <location>
        <begin position="34"/>
        <end position="43"/>
    </location>
</feature>
<feature type="compositionally biased region" description="Pro residues" evidence="4">
    <location>
        <begin position="87"/>
        <end position="97"/>
    </location>
</feature>
<feature type="modified residue" description="Phosphoserine" evidence="2">
    <location>
        <position position="34"/>
    </location>
</feature>
<feature type="modified residue" description="Phosphoserine" evidence="7">
    <location>
        <position position="38"/>
    </location>
</feature>
<feature type="modified residue" description="Phosphoserine" evidence="7">
    <location>
        <position position="55"/>
    </location>
</feature>
<feature type="modified residue" description="Phosphoserine" evidence="7">
    <location>
        <position position="58"/>
    </location>
</feature>
<feature type="modified residue" description="Phosphothreonine" evidence="2">
    <location>
        <position position="61"/>
    </location>
</feature>
<feature type="splice variant" id="VSP_018153" description="In isoform 2." evidence="5">
    <location>
        <begin position="1"/>
        <end position="38"/>
    </location>
</feature>
<feature type="splice variant" id="VSP_018154" description="In isoform 2." evidence="5">
    <original>PPPPGTRHTALGPRSGSLLSL</original>
    <variation>MPPLGLGDLLLPPLLLLEPDT</variation>
    <location>
        <begin position="39"/>
        <end position="59"/>
    </location>
</feature>
<feature type="sequence conflict" description="In Ref. 1; BAE33348." evidence="6" ref="1">
    <original>S</original>
    <variation>G</variation>
    <location>
        <position position="112"/>
    </location>
</feature>
<reference key="1">
    <citation type="journal article" date="2005" name="Science">
        <title>The transcriptional landscape of the mammalian genome.</title>
        <authorList>
            <person name="Carninci P."/>
            <person name="Kasukawa T."/>
            <person name="Katayama S."/>
            <person name="Gough J."/>
            <person name="Frith M.C."/>
            <person name="Maeda N."/>
            <person name="Oyama R."/>
            <person name="Ravasi T."/>
            <person name="Lenhard B."/>
            <person name="Wells C."/>
            <person name="Kodzius R."/>
            <person name="Shimokawa K."/>
            <person name="Bajic V.B."/>
            <person name="Brenner S.E."/>
            <person name="Batalov S."/>
            <person name="Forrest A.R."/>
            <person name="Zavolan M."/>
            <person name="Davis M.J."/>
            <person name="Wilming L.G."/>
            <person name="Aidinis V."/>
            <person name="Allen J.E."/>
            <person name="Ambesi-Impiombato A."/>
            <person name="Apweiler R."/>
            <person name="Aturaliya R.N."/>
            <person name="Bailey T.L."/>
            <person name="Bansal M."/>
            <person name="Baxter L."/>
            <person name="Beisel K.W."/>
            <person name="Bersano T."/>
            <person name="Bono H."/>
            <person name="Chalk A.M."/>
            <person name="Chiu K.P."/>
            <person name="Choudhary V."/>
            <person name="Christoffels A."/>
            <person name="Clutterbuck D.R."/>
            <person name="Crowe M.L."/>
            <person name="Dalla E."/>
            <person name="Dalrymple B.P."/>
            <person name="de Bono B."/>
            <person name="Della Gatta G."/>
            <person name="di Bernardo D."/>
            <person name="Down T."/>
            <person name="Engstrom P."/>
            <person name="Fagiolini M."/>
            <person name="Faulkner G."/>
            <person name="Fletcher C.F."/>
            <person name="Fukushima T."/>
            <person name="Furuno M."/>
            <person name="Futaki S."/>
            <person name="Gariboldi M."/>
            <person name="Georgii-Hemming P."/>
            <person name="Gingeras T.R."/>
            <person name="Gojobori T."/>
            <person name="Green R.E."/>
            <person name="Gustincich S."/>
            <person name="Harbers M."/>
            <person name="Hayashi Y."/>
            <person name="Hensch T.K."/>
            <person name="Hirokawa N."/>
            <person name="Hill D."/>
            <person name="Huminiecki L."/>
            <person name="Iacono M."/>
            <person name="Ikeo K."/>
            <person name="Iwama A."/>
            <person name="Ishikawa T."/>
            <person name="Jakt M."/>
            <person name="Kanapin A."/>
            <person name="Katoh M."/>
            <person name="Kawasawa Y."/>
            <person name="Kelso J."/>
            <person name="Kitamura H."/>
            <person name="Kitano H."/>
            <person name="Kollias G."/>
            <person name="Krishnan S.P."/>
            <person name="Kruger A."/>
            <person name="Kummerfeld S.K."/>
            <person name="Kurochkin I.V."/>
            <person name="Lareau L.F."/>
            <person name="Lazarevic D."/>
            <person name="Lipovich L."/>
            <person name="Liu J."/>
            <person name="Liuni S."/>
            <person name="McWilliam S."/>
            <person name="Madan Babu M."/>
            <person name="Madera M."/>
            <person name="Marchionni L."/>
            <person name="Matsuda H."/>
            <person name="Matsuzawa S."/>
            <person name="Miki H."/>
            <person name="Mignone F."/>
            <person name="Miyake S."/>
            <person name="Morris K."/>
            <person name="Mottagui-Tabar S."/>
            <person name="Mulder N."/>
            <person name="Nakano N."/>
            <person name="Nakauchi H."/>
            <person name="Ng P."/>
            <person name="Nilsson R."/>
            <person name="Nishiguchi S."/>
            <person name="Nishikawa S."/>
            <person name="Nori F."/>
            <person name="Ohara O."/>
            <person name="Okazaki Y."/>
            <person name="Orlando V."/>
            <person name="Pang K.C."/>
            <person name="Pavan W.J."/>
            <person name="Pavesi G."/>
            <person name="Pesole G."/>
            <person name="Petrovsky N."/>
            <person name="Piazza S."/>
            <person name="Reed J."/>
            <person name="Reid J.F."/>
            <person name="Ring B.Z."/>
            <person name="Ringwald M."/>
            <person name="Rost B."/>
            <person name="Ruan Y."/>
            <person name="Salzberg S.L."/>
            <person name="Sandelin A."/>
            <person name="Schneider C."/>
            <person name="Schoenbach C."/>
            <person name="Sekiguchi K."/>
            <person name="Semple C.A."/>
            <person name="Seno S."/>
            <person name="Sessa L."/>
            <person name="Sheng Y."/>
            <person name="Shibata Y."/>
            <person name="Shimada H."/>
            <person name="Shimada K."/>
            <person name="Silva D."/>
            <person name="Sinclair B."/>
            <person name="Sperling S."/>
            <person name="Stupka E."/>
            <person name="Sugiura K."/>
            <person name="Sultana R."/>
            <person name="Takenaka Y."/>
            <person name="Taki K."/>
            <person name="Tammoja K."/>
            <person name="Tan S.L."/>
            <person name="Tang S."/>
            <person name="Taylor M.S."/>
            <person name="Tegner J."/>
            <person name="Teichmann S.A."/>
            <person name="Ueda H.R."/>
            <person name="van Nimwegen E."/>
            <person name="Verardo R."/>
            <person name="Wei C.L."/>
            <person name="Yagi K."/>
            <person name="Yamanishi H."/>
            <person name="Zabarovsky E."/>
            <person name="Zhu S."/>
            <person name="Zimmer A."/>
            <person name="Hide W."/>
            <person name="Bult C."/>
            <person name="Grimmond S.M."/>
            <person name="Teasdale R.D."/>
            <person name="Liu E.T."/>
            <person name="Brusic V."/>
            <person name="Quackenbush J."/>
            <person name="Wahlestedt C."/>
            <person name="Mattick J.S."/>
            <person name="Hume D.A."/>
            <person name="Kai C."/>
            <person name="Sasaki D."/>
            <person name="Tomaru Y."/>
            <person name="Fukuda S."/>
            <person name="Kanamori-Katayama M."/>
            <person name="Suzuki M."/>
            <person name="Aoki J."/>
            <person name="Arakawa T."/>
            <person name="Iida J."/>
            <person name="Imamura K."/>
            <person name="Itoh M."/>
            <person name="Kato T."/>
            <person name="Kawaji H."/>
            <person name="Kawagashira N."/>
            <person name="Kawashima T."/>
            <person name="Kojima M."/>
            <person name="Kondo S."/>
            <person name="Konno H."/>
            <person name="Nakano K."/>
            <person name="Ninomiya N."/>
            <person name="Nishio T."/>
            <person name="Okada M."/>
            <person name="Plessy C."/>
            <person name="Shibata K."/>
            <person name="Shiraki T."/>
            <person name="Suzuki S."/>
            <person name="Tagami M."/>
            <person name="Waki K."/>
            <person name="Watahiki A."/>
            <person name="Okamura-Oho Y."/>
            <person name="Suzuki H."/>
            <person name="Kawai J."/>
            <person name="Hayashizaki Y."/>
        </authorList>
    </citation>
    <scope>NUCLEOTIDE SEQUENCE [LARGE SCALE MRNA] (ISOFORMS 1 AND 2)</scope>
    <source>
        <strain>C57BL/6J</strain>
    </source>
</reference>
<reference key="2">
    <citation type="journal article" date="2004" name="Genome Res.">
        <title>The status, quality, and expansion of the NIH full-length cDNA project: the Mammalian Gene Collection (MGC).</title>
        <authorList>
            <consortium name="The MGC Project Team"/>
        </authorList>
    </citation>
    <scope>NUCLEOTIDE SEQUENCE [LARGE SCALE MRNA] (ISOFORM 1)</scope>
    <source>
        <strain>Czech II</strain>
        <strain>FVB/N</strain>
        <tissue>Mammary gland</tissue>
    </source>
</reference>
<reference key="3">
    <citation type="journal article" date="2009" name="Immunity">
        <title>The phagosomal proteome in interferon-gamma-activated macrophages.</title>
        <authorList>
            <person name="Trost M."/>
            <person name="English L."/>
            <person name="Lemieux S."/>
            <person name="Courcelles M."/>
            <person name="Desjardins M."/>
            <person name="Thibault P."/>
        </authorList>
    </citation>
    <scope>PHOSPHORYLATION [LARGE SCALE ANALYSIS] AT SER-38; SER-55 AND SER-58</scope>
    <scope>IDENTIFICATION BY MASS SPECTROMETRY [LARGE SCALE ANALYSIS]</scope>
</reference>
<reference key="4">
    <citation type="journal article" date="2010" name="Cell">
        <title>A tissue-specific atlas of mouse protein phosphorylation and expression.</title>
        <authorList>
            <person name="Huttlin E.L."/>
            <person name="Jedrychowski M.P."/>
            <person name="Elias J.E."/>
            <person name="Goswami T."/>
            <person name="Rad R."/>
            <person name="Beausoleil S.A."/>
            <person name="Villen J."/>
            <person name="Haas W."/>
            <person name="Sowa M.E."/>
            <person name="Gygi S.P."/>
        </authorList>
    </citation>
    <scope>IDENTIFICATION BY MASS SPECTROMETRY [LARGE SCALE ANALYSIS]</scope>
    <source>
        <tissue>Spleen</tissue>
    </source>
</reference>
<keyword id="KW-0025">Alternative splicing</keyword>
<keyword id="KW-0963">Cytoplasm</keyword>
<keyword id="KW-0597">Phosphoprotein</keyword>
<keyword id="KW-1185">Reference proteome</keyword>
<keyword id="KW-0677">Repeat</keyword>
<evidence type="ECO:0000250" key="1"/>
<evidence type="ECO:0000250" key="2">
    <source>
        <dbReference type="UniProtKB" id="Q9Y4H4"/>
    </source>
</evidence>
<evidence type="ECO:0000255" key="3">
    <source>
        <dbReference type="PROSITE-ProRule" id="PRU00097"/>
    </source>
</evidence>
<evidence type="ECO:0000256" key="4">
    <source>
        <dbReference type="SAM" id="MobiDB-lite"/>
    </source>
</evidence>
<evidence type="ECO:0000303" key="5">
    <source>
    </source>
</evidence>
<evidence type="ECO:0000305" key="6"/>
<evidence type="ECO:0007744" key="7">
    <source>
    </source>
</evidence>
<comment type="function">
    <text evidence="1">Interacts with subunit of G(i) alpha proteins and regulates the activation of G(i) alpha proteins.</text>
</comment>
<comment type="subcellular location">
    <subcellularLocation>
        <location evidence="1">Cytoplasm</location>
    </subcellularLocation>
</comment>
<comment type="alternative products">
    <event type="alternative splicing"/>
    <isoform>
        <id>Q3U1Z5-1</id>
        <name>1</name>
        <sequence type="displayed"/>
    </isoform>
    <isoform>
        <id>Q3U1Z5-2</id>
        <name>2</name>
        <sequence type="described" ref="VSP_018153 VSP_018154"/>
    </isoform>
</comment>
<comment type="domain">
    <text evidence="1">The GoLoco 1 and/or GoLoco 3 domains exhibit GDI activity towards GDP-bound G(i) alpha protein, but not the GoLoco 2 domain.</text>
</comment>
<comment type="sequence caution" evidence="6">
    <conflict type="frameshift">
        <sequence resource="EMBL-CDS" id="BAE27009"/>
    </conflict>
</comment>
<dbReference type="EMBL" id="AK146245">
    <property type="protein sequence ID" value="BAE27009.1"/>
    <property type="status" value="ALT_FRAME"/>
    <property type="molecule type" value="mRNA"/>
</dbReference>
<dbReference type="EMBL" id="AK155617">
    <property type="protein sequence ID" value="BAE33348.1"/>
    <property type="molecule type" value="mRNA"/>
</dbReference>
<dbReference type="EMBL" id="AK155863">
    <property type="protein sequence ID" value="BAE33467.1"/>
    <property type="molecule type" value="mRNA"/>
</dbReference>
<dbReference type="EMBL" id="BC021942">
    <property type="protein sequence ID" value="AAH21942.1"/>
    <property type="molecule type" value="mRNA"/>
</dbReference>
<dbReference type="EMBL" id="BC080804">
    <property type="protein sequence ID" value="AAH80804.1"/>
    <property type="molecule type" value="mRNA"/>
</dbReference>
<dbReference type="CCDS" id="CCDS37589.1">
    <molecule id="Q3U1Z5-1"/>
</dbReference>
<dbReference type="RefSeq" id="NP_598877.1">
    <molecule id="Q3U1Z5-1"/>
    <property type="nucleotide sequence ID" value="NM_134116.5"/>
</dbReference>
<dbReference type="FunCoup" id="Q3U1Z5">
    <property type="interactions" value="748"/>
</dbReference>
<dbReference type="STRING" id="10090.ENSMUSP00000045911"/>
<dbReference type="iPTMnet" id="Q3U1Z5"/>
<dbReference type="PhosphoSitePlus" id="Q3U1Z5"/>
<dbReference type="jPOST" id="Q3U1Z5"/>
<dbReference type="PaxDb" id="10090-ENSMUSP00000045911"/>
<dbReference type="ProteomicsDB" id="271049">
    <molecule id="Q3U1Z5-1"/>
</dbReference>
<dbReference type="ProteomicsDB" id="271050">
    <molecule id="Q3U1Z5-2"/>
</dbReference>
<dbReference type="Antibodypedia" id="28524">
    <property type="antibodies" value="63 antibodies from 17 providers"/>
</dbReference>
<dbReference type="DNASU" id="106512"/>
<dbReference type="Ensembl" id="ENSMUST00000038244.15">
    <molecule id="Q3U1Z5-1"/>
    <property type="protein sequence ID" value="ENSMUSP00000045911.9"/>
    <property type="gene ID" value="ENSMUSG00000034786.18"/>
</dbReference>
<dbReference type="GeneID" id="106512"/>
<dbReference type="KEGG" id="mmu:106512"/>
<dbReference type="UCSC" id="uc012aqd.1">
    <molecule id="Q3U1Z5-1"/>
    <property type="organism name" value="mouse"/>
</dbReference>
<dbReference type="AGR" id="MGI:2146785"/>
<dbReference type="CTD" id="63940"/>
<dbReference type="MGI" id="MGI:2146785">
    <property type="gene designation" value="Gpsm3"/>
</dbReference>
<dbReference type="VEuPathDB" id="HostDB:ENSMUSG00000034786"/>
<dbReference type="eggNOG" id="ENOG502STIS">
    <property type="taxonomic scope" value="Eukaryota"/>
</dbReference>
<dbReference type="GeneTree" id="ENSGT00390000002471"/>
<dbReference type="HOGENOM" id="CLU_139851_0_0_1"/>
<dbReference type="InParanoid" id="Q3U1Z5"/>
<dbReference type="OMA" id="HQSQRME"/>
<dbReference type="PhylomeDB" id="Q3U1Z5"/>
<dbReference type="TreeFam" id="TF339136"/>
<dbReference type="Reactome" id="R-MMU-418594">
    <property type="pathway name" value="G alpha (i) signalling events"/>
</dbReference>
<dbReference type="BioGRID-ORCS" id="106512">
    <property type="hits" value="0 hits in 76 CRISPR screens"/>
</dbReference>
<dbReference type="ChiTaRS" id="Gpsm3">
    <property type="organism name" value="mouse"/>
</dbReference>
<dbReference type="PRO" id="PR:Q3U1Z5"/>
<dbReference type="Proteomes" id="UP000000589">
    <property type="component" value="Chromosome 17"/>
</dbReference>
<dbReference type="RNAct" id="Q3U1Z5">
    <property type="molecule type" value="protein"/>
</dbReference>
<dbReference type="Bgee" id="ENSMUSG00000034786">
    <property type="expression patterns" value="Expressed in granulocyte and 80 other cell types or tissues"/>
</dbReference>
<dbReference type="ExpressionAtlas" id="Q3U1Z5">
    <property type="expression patterns" value="baseline and differential"/>
</dbReference>
<dbReference type="GO" id="GO:0005737">
    <property type="term" value="C:cytoplasm"/>
    <property type="evidence" value="ECO:0007669"/>
    <property type="project" value="UniProtKB-SubCell"/>
</dbReference>
<dbReference type="GO" id="GO:0005886">
    <property type="term" value="C:plasma membrane"/>
    <property type="evidence" value="ECO:0000314"/>
    <property type="project" value="MGI"/>
</dbReference>
<dbReference type="GO" id="GO:0030695">
    <property type="term" value="F:GTPase regulator activity"/>
    <property type="evidence" value="ECO:0007669"/>
    <property type="project" value="InterPro"/>
</dbReference>
<dbReference type="GO" id="GO:1900017">
    <property type="term" value="P:positive regulation of cytokine production involved in inflammatory response"/>
    <property type="evidence" value="ECO:0000315"/>
    <property type="project" value="MGI"/>
</dbReference>
<dbReference type="GO" id="GO:0050729">
    <property type="term" value="P:positive regulation of inflammatory response"/>
    <property type="evidence" value="ECO:0000315"/>
    <property type="project" value="MGI"/>
</dbReference>
<dbReference type="GO" id="GO:0002690">
    <property type="term" value="P:positive regulation of leukocyte chemotaxis"/>
    <property type="evidence" value="ECO:0000315"/>
    <property type="project" value="MGI"/>
</dbReference>
<dbReference type="FunFam" id="1.25.40.10:FF:000241">
    <property type="entry name" value="G-protein-signaling modulator 3 isoform X1"/>
    <property type="match status" value="1"/>
</dbReference>
<dbReference type="Gene3D" id="1.25.40.10">
    <property type="entry name" value="Tetratricopeptide repeat domain"/>
    <property type="match status" value="1"/>
</dbReference>
<dbReference type="InterPro" id="IPR003109">
    <property type="entry name" value="GoLoco_motif"/>
</dbReference>
<dbReference type="InterPro" id="IPR042888">
    <property type="entry name" value="GPSM3"/>
</dbReference>
<dbReference type="InterPro" id="IPR011990">
    <property type="entry name" value="TPR-like_helical_dom_sf"/>
</dbReference>
<dbReference type="PANTHER" id="PTHR47617">
    <property type="entry name" value="G-PROTEIN SIGNALING MODULATOR 3"/>
    <property type="match status" value="1"/>
</dbReference>
<dbReference type="PANTHER" id="PTHR47617:SF1">
    <property type="entry name" value="G-PROTEIN-SIGNALING MODULATOR 3"/>
    <property type="match status" value="1"/>
</dbReference>
<dbReference type="Pfam" id="PF02188">
    <property type="entry name" value="GoLoco"/>
    <property type="match status" value="2"/>
</dbReference>
<dbReference type="SMART" id="SM00390">
    <property type="entry name" value="GoLoco"/>
    <property type="match status" value="3"/>
</dbReference>
<dbReference type="PROSITE" id="PS50877">
    <property type="entry name" value="GOLOCO"/>
    <property type="match status" value="2"/>
</dbReference>
<proteinExistence type="evidence at protein level"/>
<sequence length="159" mass="17619">MEAERPQEEDGEQSLPQDDQGWPPVNATARPWRSAPPSPPPPGTRHTALGPRSGSLLSLQTELLLDLVAEAQSRRLEEQRATFHTPEAPPNLAPAPPRLLEDKEQLYSTILSHQCQRIEAQRSDPPLPPGGQELLELLLRVQGGGRMEEQRSRPPTHTC</sequence>